<sequence>MDNLRPVLYLSMLLVLFLIWQAWNRDYGPQPVAAPGAQEQVMDRDGVPAPPQDVPDAPVSEAVDAPTEVAPAEPDRRRIRVVTDVLDIEIDTRGGDLVRADLPTYPVSLRTPDQPIRLLDERFRQYVAQSGLIHDRVPGVSGEGRAPSHHAIFQAERDEFRLADGQDELRVPLTWTSEDGVQVTKTYTFRRGDFLINVDHAVRNNSDQPWVGRQYRQIRHGSTPSRESWFLYTFTGVAYHDGRYEKLSLEDMAGKPLDKDVQGGWISIIQHYFLTAWVPFEHEINQFYTRVLGTPARPEHIIGMRSEAQTAAPGEETVFTSRFWVGPKEQAALKAIQPGLELTVDYGMLSFLAKPLFWVLDWIHNVVGNWGWAIIILTILIKLVFYKLSETSYRSMAKMRAVQPKMMQLKDRYGDDKQRMNQALMELYKKEKINPLGGCLPILVQIPVFIALYWVLLESVEMRQAPWILWIQDLSVRDPYFILPILMGVTMIAQYKLNPAPMDPIQQKLMMALPFVFTVFFAFFPAGLVLYWFVNNLLSIAQQWYITRNIEKAGKKG</sequence>
<protein>
    <recommendedName>
        <fullName evidence="1">Membrane protein insertase YidC</fullName>
    </recommendedName>
    <alternativeName>
        <fullName evidence="1">Foldase YidC</fullName>
    </alternativeName>
    <alternativeName>
        <fullName evidence="1">Membrane integrase YidC</fullName>
    </alternativeName>
    <alternativeName>
        <fullName evidence="1">Membrane protein YidC</fullName>
    </alternativeName>
</protein>
<feature type="chain" id="PRO_1000187711" description="Membrane protein insertase YidC">
    <location>
        <begin position="1"/>
        <end position="557"/>
    </location>
</feature>
<feature type="transmembrane region" description="Helical" evidence="1">
    <location>
        <begin position="3"/>
        <end position="23"/>
    </location>
</feature>
<feature type="transmembrane region" description="Helical" evidence="1">
    <location>
        <begin position="366"/>
        <end position="386"/>
    </location>
</feature>
<feature type="transmembrane region" description="Helical" evidence="1">
    <location>
        <begin position="436"/>
        <end position="456"/>
    </location>
</feature>
<feature type="transmembrane region" description="Helical" evidence="1">
    <location>
        <begin position="480"/>
        <end position="500"/>
    </location>
</feature>
<feature type="transmembrane region" description="Helical" evidence="1">
    <location>
        <begin position="514"/>
        <end position="534"/>
    </location>
</feature>
<feature type="region of interest" description="Disordered" evidence="2">
    <location>
        <begin position="34"/>
        <end position="60"/>
    </location>
</feature>
<organism>
    <name type="scientific">Thioalkalivibrio sulfidiphilus (strain HL-EbGR7)</name>
    <dbReference type="NCBI Taxonomy" id="396588"/>
    <lineage>
        <taxon>Bacteria</taxon>
        <taxon>Pseudomonadati</taxon>
        <taxon>Pseudomonadota</taxon>
        <taxon>Gammaproteobacteria</taxon>
        <taxon>Chromatiales</taxon>
        <taxon>Ectothiorhodospiraceae</taxon>
        <taxon>Thioalkalivibrio</taxon>
    </lineage>
</organism>
<reference key="1">
    <citation type="journal article" date="2011" name="Stand. Genomic Sci.">
        <title>Complete genome sequence of 'Thioalkalivibrio sulfidophilus' HL-EbGr7.</title>
        <authorList>
            <person name="Muyzer G."/>
            <person name="Sorokin D.Y."/>
            <person name="Mavromatis K."/>
            <person name="Lapidus A."/>
            <person name="Clum A."/>
            <person name="Ivanova N."/>
            <person name="Pati A."/>
            <person name="d'Haeseleer P."/>
            <person name="Woyke T."/>
            <person name="Kyrpides N.C."/>
        </authorList>
    </citation>
    <scope>NUCLEOTIDE SEQUENCE [LARGE SCALE GENOMIC DNA]</scope>
    <source>
        <strain>HL-EbGR7</strain>
    </source>
</reference>
<evidence type="ECO:0000255" key="1">
    <source>
        <dbReference type="HAMAP-Rule" id="MF_01810"/>
    </source>
</evidence>
<evidence type="ECO:0000256" key="2">
    <source>
        <dbReference type="SAM" id="MobiDB-lite"/>
    </source>
</evidence>
<keyword id="KW-0997">Cell inner membrane</keyword>
<keyword id="KW-1003">Cell membrane</keyword>
<keyword id="KW-0143">Chaperone</keyword>
<keyword id="KW-0472">Membrane</keyword>
<keyword id="KW-0653">Protein transport</keyword>
<keyword id="KW-1185">Reference proteome</keyword>
<keyword id="KW-0812">Transmembrane</keyword>
<keyword id="KW-1133">Transmembrane helix</keyword>
<keyword id="KW-0813">Transport</keyword>
<accession>B8GRD1</accession>
<comment type="function">
    <text evidence="1">Required for the insertion and/or proper folding and/or complex formation of integral membrane proteins into the membrane. Involved in integration of membrane proteins that insert both dependently and independently of the Sec translocase complex, as well as at least some lipoproteins. Aids folding of multispanning membrane proteins.</text>
</comment>
<comment type="subunit">
    <text evidence="1">Interacts with the Sec translocase complex via SecD. Specifically interacts with transmembrane segments of nascent integral membrane proteins during membrane integration.</text>
</comment>
<comment type="subcellular location">
    <subcellularLocation>
        <location evidence="1">Cell inner membrane</location>
        <topology evidence="1">Multi-pass membrane protein</topology>
    </subcellularLocation>
</comment>
<comment type="similarity">
    <text evidence="1">Belongs to the OXA1/ALB3/YidC family. Type 1 subfamily.</text>
</comment>
<dbReference type="EMBL" id="CP001339">
    <property type="protein sequence ID" value="ACL74385.1"/>
    <property type="molecule type" value="Genomic_DNA"/>
</dbReference>
<dbReference type="RefSeq" id="WP_012639847.1">
    <property type="nucleotide sequence ID" value="NC_011901.1"/>
</dbReference>
<dbReference type="SMR" id="B8GRD1"/>
<dbReference type="STRING" id="396588.Tgr7_3318"/>
<dbReference type="KEGG" id="tgr:Tgr7_3318"/>
<dbReference type="eggNOG" id="COG0706">
    <property type="taxonomic scope" value="Bacteria"/>
</dbReference>
<dbReference type="HOGENOM" id="CLU_016535_3_0_6"/>
<dbReference type="OrthoDB" id="9780552at2"/>
<dbReference type="Proteomes" id="UP000002383">
    <property type="component" value="Chromosome"/>
</dbReference>
<dbReference type="GO" id="GO:0005886">
    <property type="term" value="C:plasma membrane"/>
    <property type="evidence" value="ECO:0007669"/>
    <property type="project" value="UniProtKB-SubCell"/>
</dbReference>
<dbReference type="GO" id="GO:0032977">
    <property type="term" value="F:membrane insertase activity"/>
    <property type="evidence" value="ECO:0007669"/>
    <property type="project" value="InterPro"/>
</dbReference>
<dbReference type="GO" id="GO:0051205">
    <property type="term" value="P:protein insertion into membrane"/>
    <property type="evidence" value="ECO:0007669"/>
    <property type="project" value="TreeGrafter"/>
</dbReference>
<dbReference type="GO" id="GO:0015031">
    <property type="term" value="P:protein transport"/>
    <property type="evidence" value="ECO:0007669"/>
    <property type="project" value="UniProtKB-KW"/>
</dbReference>
<dbReference type="CDD" id="cd20070">
    <property type="entry name" value="5TM_YidC_Alb3"/>
    <property type="match status" value="1"/>
</dbReference>
<dbReference type="CDD" id="cd19961">
    <property type="entry name" value="EcYidC-like_peri"/>
    <property type="match status" value="1"/>
</dbReference>
<dbReference type="Gene3D" id="2.70.98.90">
    <property type="match status" value="1"/>
</dbReference>
<dbReference type="HAMAP" id="MF_01810">
    <property type="entry name" value="YidC_type1"/>
    <property type="match status" value="1"/>
</dbReference>
<dbReference type="InterPro" id="IPR019998">
    <property type="entry name" value="Membr_insert_YidC"/>
</dbReference>
<dbReference type="InterPro" id="IPR028053">
    <property type="entry name" value="Membr_insert_YidC_N"/>
</dbReference>
<dbReference type="InterPro" id="IPR001708">
    <property type="entry name" value="YidC/ALB3/OXA1/COX18"/>
</dbReference>
<dbReference type="InterPro" id="IPR028055">
    <property type="entry name" value="YidC/Oxa/ALB_C"/>
</dbReference>
<dbReference type="InterPro" id="IPR047196">
    <property type="entry name" value="YidC_ALB_C"/>
</dbReference>
<dbReference type="InterPro" id="IPR038221">
    <property type="entry name" value="YidC_periplasmic_sf"/>
</dbReference>
<dbReference type="NCBIfam" id="NF002352">
    <property type="entry name" value="PRK01318.1-3"/>
    <property type="match status" value="1"/>
</dbReference>
<dbReference type="NCBIfam" id="NF002353">
    <property type="entry name" value="PRK01318.1-4"/>
    <property type="match status" value="1"/>
</dbReference>
<dbReference type="NCBIfam" id="TIGR03593">
    <property type="entry name" value="yidC_nterm"/>
    <property type="match status" value="1"/>
</dbReference>
<dbReference type="NCBIfam" id="TIGR03592">
    <property type="entry name" value="yidC_oxa1_cterm"/>
    <property type="match status" value="1"/>
</dbReference>
<dbReference type="PANTHER" id="PTHR12428:SF65">
    <property type="entry name" value="CYTOCHROME C OXIDASE ASSEMBLY PROTEIN COX18, MITOCHONDRIAL"/>
    <property type="match status" value="1"/>
</dbReference>
<dbReference type="PANTHER" id="PTHR12428">
    <property type="entry name" value="OXA1"/>
    <property type="match status" value="1"/>
</dbReference>
<dbReference type="Pfam" id="PF02096">
    <property type="entry name" value="60KD_IMP"/>
    <property type="match status" value="1"/>
</dbReference>
<dbReference type="Pfam" id="PF14849">
    <property type="entry name" value="YidC_periplas"/>
    <property type="match status" value="1"/>
</dbReference>
<dbReference type="PRINTS" id="PR00701">
    <property type="entry name" value="60KDINNERMP"/>
</dbReference>
<dbReference type="PRINTS" id="PR01900">
    <property type="entry name" value="YIDCPROTEIN"/>
</dbReference>
<proteinExistence type="inferred from homology"/>
<name>YIDC_THISH</name>
<gene>
    <name evidence="1" type="primary">yidC</name>
    <name type="ordered locus">Tgr7_3318</name>
</gene>